<protein>
    <recommendedName>
        <fullName evidence="1">MEMO1 family protein LS215_2219</fullName>
    </recommendedName>
</protein>
<dbReference type="EMBL" id="CP001399">
    <property type="protein sequence ID" value="ACP36206.1"/>
    <property type="molecule type" value="Genomic_DNA"/>
</dbReference>
<dbReference type="RefSeq" id="WP_012714160.1">
    <property type="nucleotide sequence ID" value="NC_012589.1"/>
</dbReference>
<dbReference type="SMR" id="C3MJQ3"/>
<dbReference type="GeneID" id="7798198"/>
<dbReference type="KEGG" id="sis:LS215_2219"/>
<dbReference type="HOGENOM" id="CLU_038085_2_0_2"/>
<dbReference type="OrthoDB" id="372162at2157"/>
<dbReference type="Proteomes" id="UP000001747">
    <property type="component" value="Chromosome"/>
</dbReference>
<dbReference type="CDD" id="cd07361">
    <property type="entry name" value="MEMO_like"/>
    <property type="match status" value="1"/>
</dbReference>
<dbReference type="Gene3D" id="3.40.830.10">
    <property type="entry name" value="LigB-like"/>
    <property type="match status" value="1"/>
</dbReference>
<dbReference type="HAMAP" id="MF_00055">
    <property type="entry name" value="MEMO1"/>
    <property type="match status" value="1"/>
</dbReference>
<dbReference type="InterPro" id="IPR002737">
    <property type="entry name" value="MEMO1_fam"/>
</dbReference>
<dbReference type="NCBIfam" id="TIGR04336">
    <property type="entry name" value="AmmeMemoSam_B"/>
    <property type="match status" value="1"/>
</dbReference>
<dbReference type="PANTHER" id="PTHR11060">
    <property type="entry name" value="PROTEIN MEMO1"/>
    <property type="match status" value="1"/>
</dbReference>
<dbReference type="PANTHER" id="PTHR11060:SF0">
    <property type="entry name" value="PROTEIN MEMO1"/>
    <property type="match status" value="1"/>
</dbReference>
<dbReference type="Pfam" id="PF01875">
    <property type="entry name" value="Memo"/>
    <property type="match status" value="1"/>
</dbReference>
<evidence type="ECO:0000255" key="1">
    <source>
        <dbReference type="HAMAP-Rule" id="MF_00055"/>
    </source>
</evidence>
<comment type="similarity">
    <text evidence="1">Belongs to the MEMO1 family.</text>
</comment>
<organism>
    <name type="scientific">Saccharolobus islandicus (strain L.S.2.15 / Lassen #1)</name>
    <name type="common">Sulfolobus islandicus</name>
    <dbReference type="NCBI Taxonomy" id="429572"/>
    <lineage>
        <taxon>Archaea</taxon>
        <taxon>Thermoproteota</taxon>
        <taxon>Thermoprotei</taxon>
        <taxon>Sulfolobales</taxon>
        <taxon>Sulfolobaceae</taxon>
        <taxon>Saccharolobus</taxon>
    </lineage>
</organism>
<gene>
    <name type="ordered locus">LS215_2219</name>
</gene>
<feature type="chain" id="PRO_1000202326" description="MEMO1 family protein LS215_2219">
    <location>
        <begin position="1"/>
        <end position="284"/>
    </location>
</feature>
<reference key="1">
    <citation type="journal article" date="2009" name="Proc. Natl. Acad. Sci. U.S.A.">
        <title>Biogeography of the Sulfolobus islandicus pan-genome.</title>
        <authorList>
            <person name="Reno M.L."/>
            <person name="Held N.L."/>
            <person name="Fields C.J."/>
            <person name="Burke P.V."/>
            <person name="Whitaker R.J."/>
        </authorList>
    </citation>
    <scope>NUCLEOTIDE SEQUENCE [LARGE SCALE GENOMIC DNA]</scope>
    <source>
        <strain>L.S.2.15 / Lassen #1</strain>
    </source>
</reference>
<accession>C3MJQ3</accession>
<name>Y2219_SACI2</name>
<proteinExistence type="inferred from homology"/>
<sequence length="284" mass="32184">MKRLPAVAGSFYESDPKKLKMQIEWSFRHNIGPRDIPKQTYEKKKRDNLFFVVPHAGYIYSGPVAAHSYYYLVSEGRPDVVIILGPNHTGLGSYVSAWPKGEWETPLGSVKIDEEILMQLVKESEVIDLDEKSHLYEHSIEVQLPFLQYFFDDDFKIVPIVIMMQTLEIAEFLADAIYNVMQKNPDKDIVVLASSDMNHYDPHEITVKKDVEAIEKIQQLDYKGLYEVVEGKDVTLCGYGPIMVNLILAKKFGKKAYILKHATSGDTSGPKDSVVGYLAARFGS</sequence>